<feature type="chain" id="PRO_1000061641" description="UPF0246 protein SPD_1378">
    <location>
        <begin position="1"/>
        <end position="242"/>
    </location>
</feature>
<protein>
    <recommendedName>
        <fullName evidence="1">UPF0246 protein SPD_1378</fullName>
    </recommendedName>
</protein>
<comment type="similarity">
    <text evidence="1">Belongs to the UPF0246 family.</text>
</comment>
<name>Y1378_STRP2</name>
<accession>Q04JK0</accession>
<organism>
    <name type="scientific">Streptococcus pneumoniae serotype 2 (strain D39 / NCTC 7466)</name>
    <dbReference type="NCBI Taxonomy" id="373153"/>
    <lineage>
        <taxon>Bacteria</taxon>
        <taxon>Bacillati</taxon>
        <taxon>Bacillota</taxon>
        <taxon>Bacilli</taxon>
        <taxon>Lactobacillales</taxon>
        <taxon>Streptococcaceae</taxon>
        <taxon>Streptococcus</taxon>
    </lineage>
</organism>
<evidence type="ECO:0000255" key="1">
    <source>
        <dbReference type="HAMAP-Rule" id="MF_00652"/>
    </source>
</evidence>
<keyword id="KW-1185">Reference proteome</keyword>
<gene>
    <name type="ordered locus">SPD_1378</name>
</gene>
<sequence length="242" mass="27466">MKILIPTAKEMNTDLPSIEAIPLKPESQTVLDALALYSASQLESFYKVSAEKAAEEFQNIQALKRQTAQHYPALKLFDGLMYRNIKRDKLTEAEQDYLENHVFITSALYGVVPALSPMAPHRLDFLMKLKVAGKTLKSHWKAVYDEALKKEEVIFSLLSSEFETVFSKEIRAKMVTFKFMEDRGGQLKIHSTISKKARGAFLTALIENQVQTVGEARRLNFAGFVYREDLSQPQGLVFVKEV</sequence>
<dbReference type="EMBL" id="CP000410">
    <property type="protein sequence ID" value="ABJ55199.1"/>
    <property type="molecule type" value="Genomic_DNA"/>
</dbReference>
<dbReference type="SMR" id="Q04JK0"/>
<dbReference type="PaxDb" id="373153-SPD_1378"/>
<dbReference type="KEGG" id="spd:SPD_1378"/>
<dbReference type="eggNOG" id="COG3022">
    <property type="taxonomic scope" value="Bacteria"/>
</dbReference>
<dbReference type="HOGENOM" id="CLU_061989_2_1_9"/>
<dbReference type="BioCyc" id="SPNE373153:G1G6V-1483-MONOMER"/>
<dbReference type="Proteomes" id="UP000001452">
    <property type="component" value="Chromosome"/>
</dbReference>
<dbReference type="GO" id="GO:0005829">
    <property type="term" value="C:cytosol"/>
    <property type="evidence" value="ECO:0007669"/>
    <property type="project" value="TreeGrafter"/>
</dbReference>
<dbReference type="GO" id="GO:0033194">
    <property type="term" value="P:response to hydroperoxide"/>
    <property type="evidence" value="ECO:0007669"/>
    <property type="project" value="TreeGrafter"/>
</dbReference>
<dbReference type="HAMAP" id="MF_00652">
    <property type="entry name" value="UPF0246"/>
    <property type="match status" value="1"/>
</dbReference>
<dbReference type="InterPro" id="IPR005583">
    <property type="entry name" value="YaaA"/>
</dbReference>
<dbReference type="NCBIfam" id="NF002543">
    <property type="entry name" value="PRK02101.1-4"/>
    <property type="match status" value="1"/>
</dbReference>
<dbReference type="PANTHER" id="PTHR30283:SF4">
    <property type="entry name" value="PEROXIDE STRESS RESISTANCE PROTEIN YAAA"/>
    <property type="match status" value="1"/>
</dbReference>
<dbReference type="PANTHER" id="PTHR30283">
    <property type="entry name" value="PEROXIDE STRESS RESPONSE PROTEIN YAAA"/>
    <property type="match status" value="1"/>
</dbReference>
<dbReference type="Pfam" id="PF03883">
    <property type="entry name" value="H2O2_YaaD"/>
    <property type="match status" value="1"/>
</dbReference>
<proteinExistence type="inferred from homology"/>
<reference key="1">
    <citation type="journal article" date="2007" name="J. Bacteriol.">
        <title>Genome sequence of Avery's virulent serotype 2 strain D39 of Streptococcus pneumoniae and comparison with that of unencapsulated laboratory strain R6.</title>
        <authorList>
            <person name="Lanie J.A."/>
            <person name="Ng W.-L."/>
            <person name="Kazmierczak K.M."/>
            <person name="Andrzejewski T.M."/>
            <person name="Davidsen T.M."/>
            <person name="Wayne K.J."/>
            <person name="Tettelin H."/>
            <person name="Glass J.I."/>
            <person name="Winkler M.E."/>
        </authorList>
    </citation>
    <scope>NUCLEOTIDE SEQUENCE [LARGE SCALE GENOMIC DNA]</scope>
    <source>
        <strain>D39 / NCTC 7466</strain>
    </source>
</reference>